<feature type="chain" id="PRO_0000199997" description="Gas vesicle protein J">
    <location>
        <begin position="1"/>
        <end position="148"/>
    </location>
</feature>
<feature type="region of interest" description="Disordered" evidence="3">
    <location>
        <begin position="1"/>
        <end position="21"/>
    </location>
</feature>
<feature type="region of interest" description="Disordered" evidence="3">
    <location>
        <begin position="118"/>
        <end position="148"/>
    </location>
</feature>
<feature type="compositionally biased region" description="Polar residues" evidence="3">
    <location>
        <begin position="136"/>
        <end position="148"/>
    </location>
</feature>
<protein>
    <recommendedName>
        <fullName>Gas vesicle protein J</fullName>
        <shortName evidence="5">GvpJ</shortName>
    </recommendedName>
</protein>
<dbReference type="EMBL" id="BA000019">
    <property type="protein sequence ID" value="BAB73949.1"/>
    <property type="molecule type" value="Genomic_DNA"/>
</dbReference>
<dbReference type="PIR" id="AC2087">
    <property type="entry name" value="AC2087"/>
</dbReference>
<dbReference type="RefSeq" id="WP_010996408.1">
    <property type="nucleotide sequence ID" value="NZ_RSCN01000004.1"/>
</dbReference>
<dbReference type="SMR" id="Q8YUT1"/>
<dbReference type="STRING" id="103690.gene:10494279"/>
<dbReference type="KEGG" id="ana:all2250"/>
<dbReference type="eggNOG" id="ENOG503303G">
    <property type="taxonomic scope" value="Bacteria"/>
</dbReference>
<dbReference type="OrthoDB" id="532318at2"/>
<dbReference type="Proteomes" id="UP000002483">
    <property type="component" value="Chromosome"/>
</dbReference>
<dbReference type="GO" id="GO:0031411">
    <property type="term" value="C:gas vesicle"/>
    <property type="evidence" value="ECO:0007669"/>
    <property type="project" value="UniProtKB-SubCell"/>
</dbReference>
<dbReference type="GO" id="GO:0012506">
    <property type="term" value="C:vesicle membrane"/>
    <property type="evidence" value="ECO:0007669"/>
    <property type="project" value="InterPro"/>
</dbReference>
<dbReference type="GO" id="GO:0005198">
    <property type="term" value="F:structural molecule activity"/>
    <property type="evidence" value="ECO:0007669"/>
    <property type="project" value="InterPro"/>
</dbReference>
<dbReference type="InterPro" id="IPR000638">
    <property type="entry name" value="Gas-vesicle_GvpA-like"/>
</dbReference>
<dbReference type="InterPro" id="IPR050530">
    <property type="entry name" value="GvpA"/>
</dbReference>
<dbReference type="InterPro" id="IPR018493">
    <property type="entry name" value="GvpA-like_CS"/>
</dbReference>
<dbReference type="PANTHER" id="PTHR35344:SF4">
    <property type="entry name" value="GAS VESICLE PROTEIN A1"/>
    <property type="match status" value="1"/>
</dbReference>
<dbReference type="PANTHER" id="PTHR35344">
    <property type="entry name" value="GAS VESICLE STRUCTURAL PROTEIN 2-RELATED"/>
    <property type="match status" value="1"/>
</dbReference>
<dbReference type="Pfam" id="PF00741">
    <property type="entry name" value="Gas_vesicle"/>
    <property type="match status" value="1"/>
</dbReference>
<dbReference type="PROSITE" id="PS00234">
    <property type="entry name" value="GAS_VESICLE_A_1"/>
    <property type="match status" value="1"/>
</dbReference>
<keyword id="KW-0304">Gas vesicle</keyword>
<keyword id="KW-1185">Reference proteome</keyword>
<name>GVPJ_NOSS1</name>
<sequence length="148" mass="16598">MTTTPIHPTRPQTNSNRVIPTSTQGSTLADILERVLDKGIVIAGDISISIASTELIHIRIRLLISSVDKAREMGINWWENDPYLSSKSQRLVEENQQLQQRLESLETQLRLLTSAAKEETTLTANNPEDLQPMYEVNSQEGDNSQLEA</sequence>
<evidence type="ECO:0000250" key="1">
    <source>
        <dbReference type="UniProtKB" id="P24374"/>
    </source>
</evidence>
<evidence type="ECO:0000250" key="2">
    <source>
        <dbReference type="UniProtKB" id="P55147"/>
    </source>
</evidence>
<evidence type="ECO:0000256" key="3">
    <source>
        <dbReference type="SAM" id="MobiDB-lite"/>
    </source>
</evidence>
<evidence type="ECO:0000269" key="4">
    <source>
    </source>
</evidence>
<evidence type="ECO:0000303" key="5">
    <source>
    </source>
</evidence>
<evidence type="ECO:0000305" key="6"/>
<gene>
    <name evidence="5" type="primary">gvpJ</name>
    <name type="ordered locus">all2250</name>
</gene>
<accession>Q8YUT1</accession>
<reference key="1">
    <citation type="journal article" date="2001" name="DNA Res.">
        <title>Complete genomic sequence of the filamentous nitrogen-fixing cyanobacterium Anabaena sp. strain PCC 7120.</title>
        <authorList>
            <person name="Kaneko T."/>
            <person name="Nakamura Y."/>
            <person name="Wolk C.P."/>
            <person name="Kuritz T."/>
            <person name="Sasamoto S."/>
            <person name="Watanabe A."/>
            <person name="Iriguchi M."/>
            <person name="Ishikawa A."/>
            <person name="Kawashima K."/>
            <person name="Kimura T."/>
            <person name="Kishida Y."/>
            <person name="Kohara M."/>
            <person name="Matsumoto M."/>
            <person name="Matsuno A."/>
            <person name="Muraki A."/>
            <person name="Nakazaki N."/>
            <person name="Shimpo S."/>
            <person name="Sugimoto M."/>
            <person name="Takazawa M."/>
            <person name="Yamada M."/>
            <person name="Yasuda M."/>
            <person name="Tabata S."/>
        </authorList>
    </citation>
    <scope>NUCLEOTIDE SEQUENCE [LARGE SCALE GENOMIC DNA]</scope>
    <source>
        <strain>PCC 7120 / SAG 25.82 / UTEX 2576</strain>
    </source>
</reference>
<reference key="2">
    <citation type="journal article" date="2020" name="BMC Microbiol.">
        <title>The model cyanobacteria Anabaena sp. PCC 7120 possess an intact but partially degenerated gene cluster encoding gas vesicles.</title>
        <authorList>
            <person name="Cai K."/>
            <person name="Xu B.Y."/>
            <person name="Jiang Y.L."/>
            <person name="Wang Y."/>
            <person name="Chen Y."/>
            <person name="Zhou C.Z."/>
            <person name="Li Q."/>
        </authorList>
    </citation>
    <scope>LACK OF GAS VESICLES IN VIVO</scope>
    <scope>FUNCTION IN E.COLI</scope>
    <source>
        <strain>PCC 7120 / SAG 25.82 / UTEX 2576</strain>
    </source>
</reference>
<comment type="function">
    <text evidence="1 2">A minor component of the gas vesicle, might be involved in nucleating gas vesicle formation (By similarity). Gas vesicles (GV) are hollow, gas filled proteinaceous nanostructures. During planktonic growth they allow positioning of the organism at a favorable depth for light or nutrient acquisition (By similarity).</text>
</comment>
<comment type="function">
    <text evidence="4">Cluster expression in E.coli (gvpA1-gvpA2-gvpC-gvpN-gvpJ-gvpK-gvpF-gvpG-gvpV-gvpW) allows cells to float and produces irregularly shaped gas vesicles.</text>
</comment>
<comment type="subunit">
    <text evidence="1">Interacts with GvpA.</text>
</comment>
<comment type="subcellular location">
    <subcellularLocation>
        <location evidence="1">Gas vesicle</location>
    </subcellularLocation>
</comment>
<comment type="similarity">
    <text evidence="6">Belongs to the gas vesicle GvpA family.</text>
</comment>
<comment type="caution">
    <text evidence="4">Despite the presence of an intact gas vesicle cluster and gvpA transcripts, there is no evidence this strain produces gas vesicles.</text>
</comment>
<proteinExistence type="evidence at protein level"/>
<organism>
    <name type="scientific">Nostoc sp. (strain PCC 7120 / SAG 25.82 / UTEX 2576)</name>
    <dbReference type="NCBI Taxonomy" id="103690"/>
    <lineage>
        <taxon>Bacteria</taxon>
        <taxon>Bacillati</taxon>
        <taxon>Cyanobacteriota</taxon>
        <taxon>Cyanophyceae</taxon>
        <taxon>Nostocales</taxon>
        <taxon>Nostocaceae</taxon>
        <taxon>Nostoc</taxon>
    </lineage>
</organism>